<proteinExistence type="inferred from homology"/>
<sequence>MSGHNKWANIKHRKMAQDAKKSQLFTKLIRELIVAAREGGGDPETNSRLRTAIEKAKEANMPRENIEKAIKRGTGELEGVEYQEIIYEAYGPGGVALYIRALTDNKNRTAQELRHVLSRHGGSLADLGAVGWIFERKGIISVPRDQVANVEELVMMAIDAGAEDIDDQDDPVRITTSPDNLMSVKEELEKNGYKAEAGISYVPKNTVQVTGKDAEKILALLNALEDMDDVQDVYSNFEMDDAEMEAILSQMNQ</sequence>
<name>Y1011_PSELT</name>
<gene>
    <name type="ordered locus">Tlet_1011</name>
</gene>
<comment type="subcellular location">
    <subcellularLocation>
        <location evidence="1">Cytoplasm</location>
    </subcellularLocation>
</comment>
<comment type="similarity">
    <text evidence="1">Belongs to the TACO1 family.</text>
</comment>
<accession>A8F5Z3</accession>
<dbReference type="EMBL" id="CP000812">
    <property type="protein sequence ID" value="ABV33577.1"/>
    <property type="molecule type" value="Genomic_DNA"/>
</dbReference>
<dbReference type="RefSeq" id="WP_012003058.1">
    <property type="nucleotide sequence ID" value="NZ_BSDV01000001.1"/>
</dbReference>
<dbReference type="SMR" id="A8F5Z3"/>
<dbReference type="STRING" id="416591.Tlet_1011"/>
<dbReference type="KEGG" id="tle:Tlet_1011"/>
<dbReference type="eggNOG" id="COG0217">
    <property type="taxonomic scope" value="Bacteria"/>
</dbReference>
<dbReference type="HOGENOM" id="CLU_062974_2_2_0"/>
<dbReference type="OrthoDB" id="9781053at2"/>
<dbReference type="Proteomes" id="UP000002016">
    <property type="component" value="Chromosome"/>
</dbReference>
<dbReference type="GO" id="GO:0005829">
    <property type="term" value="C:cytosol"/>
    <property type="evidence" value="ECO:0007669"/>
    <property type="project" value="TreeGrafter"/>
</dbReference>
<dbReference type="GO" id="GO:0003677">
    <property type="term" value="F:DNA binding"/>
    <property type="evidence" value="ECO:0007669"/>
    <property type="project" value="UniProtKB-UniRule"/>
</dbReference>
<dbReference type="GO" id="GO:0006355">
    <property type="term" value="P:regulation of DNA-templated transcription"/>
    <property type="evidence" value="ECO:0007669"/>
    <property type="project" value="UniProtKB-UniRule"/>
</dbReference>
<dbReference type="FunFam" id="1.10.10.200:FF:000001">
    <property type="entry name" value="Probable transcriptional regulatory protein YebC"/>
    <property type="match status" value="1"/>
</dbReference>
<dbReference type="Gene3D" id="1.10.10.200">
    <property type="match status" value="1"/>
</dbReference>
<dbReference type="Gene3D" id="3.30.70.980">
    <property type="match status" value="2"/>
</dbReference>
<dbReference type="HAMAP" id="MF_00693">
    <property type="entry name" value="Transcrip_reg_TACO1"/>
    <property type="match status" value="1"/>
</dbReference>
<dbReference type="InterPro" id="IPR017856">
    <property type="entry name" value="Integrase-like_N"/>
</dbReference>
<dbReference type="InterPro" id="IPR048300">
    <property type="entry name" value="TACO1_YebC-like_2nd/3rd_dom"/>
</dbReference>
<dbReference type="InterPro" id="IPR049083">
    <property type="entry name" value="TACO1_YebC_N"/>
</dbReference>
<dbReference type="InterPro" id="IPR002876">
    <property type="entry name" value="Transcrip_reg_TACO1-like"/>
</dbReference>
<dbReference type="InterPro" id="IPR026564">
    <property type="entry name" value="Transcrip_reg_TACO1-like_dom3"/>
</dbReference>
<dbReference type="InterPro" id="IPR029072">
    <property type="entry name" value="YebC-like"/>
</dbReference>
<dbReference type="NCBIfam" id="NF001030">
    <property type="entry name" value="PRK00110.1"/>
    <property type="match status" value="1"/>
</dbReference>
<dbReference type="NCBIfam" id="NF009044">
    <property type="entry name" value="PRK12378.1"/>
    <property type="match status" value="1"/>
</dbReference>
<dbReference type="NCBIfam" id="TIGR01033">
    <property type="entry name" value="YebC/PmpR family DNA-binding transcriptional regulator"/>
    <property type="match status" value="1"/>
</dbReference>
<dbReference type="PANTHER" id="PTHR12532:SF6">
    <property type="entry name" value="TRANSCRIPTIONAL REGULATORY PROTEIN YEBC-RELATED"/>
    <property type="match status" value="1"/>
</dbReference>
<dbReference type="PANTHER" id="PTHR12532">
    <property type="entry name" value="TRANSLATIONAL ACTIVATOR OF CYTOCHROME C OXIDASE 1"/>
    <property type="match status" value="1"/>
</dbReference>
<dbReference type="Pfam" id="PF20772">
    <property type="entry name" value="TACO1_YebC_N"/>
    <property type="match status" value="1"/>
</dbReference>
<dbReference type="Pfam" id="PF01709">
    <property type="entry name" value="Transcrip_reg"/>
    <property type="match status" value="1"/>
</dbReference>
<dbReference type="SUPFAM" id="SSF75625">
    <property type="entry name" value="YebC-like"/>
    <property type="match status" value="1"/>
</dbReference>
<feature type="chain" id="PRO_1000062042" description="Probable transcriptional regulatory protein Tlet_1011">
    <location>
        <begin position="1"/>
        <end position="253"/>
    </location>
</feature>
<reference key="1">
    <citation type="submission" date="2007-08" db="EMBL/GenBank/DDBJ databases">
        <title>Complete sequence of Thermotoga lettingae TMO.</title>
        <authorList>
            <consortium name="US DOE Joint Genome Institute"/>
            <person name="Copeland A."/>
            <person name="Lucas S."/>
            <person name="Lapidus A."/>
            <person name="Barry K."/>
            <person name="Glavina del Rio T."/>
            <person name="Dalin E."/>
            <person name="Tice H."/>
            <person name="Pitluck S."/>
            <person name="Foster B."/>
            <person name="Bruce D."/>
            <person name="Schmutz J."/>
            <person name="Larimer F."/>
            <person name="Land M."/>
            <person name="Hauser L."/>
            <person name="Kyrpides N."/>
            <person name="Mikhailova N."/>
            <person name="Nelson K."/>
            <person name="Gogarten J.P."/>
            <person name="Noll K."/>
            <person name="Richardson P."/>
        </authorList>
    </citation>
    <scope>NUCLEOTIDE SEQUENCE [LARGE SCALE GENOMIC DNA]</scope>
    <source>
        <strain>ATCC BAA-301 / DSM 14385 / NBRC 107922 / TMO</strain>
    </source>
</reference>
<evidence type="ECO:0000255" key="1">
    <source>
        <dbReference type="HAMAP-Rule" id="MF_00693"/>
    </source>
</evidence>
<organism>
    <name type="scientific">Pseudothermotoga lettingae (strain ATCC BAA-301 / DSM 14385 / NBRC 107922 / TMO)</name>
    <name type="common">Thermotoga lettingae</name>
    <dbReference type="NCBI Taxonomy" id="416591"/>
    <lineage>
        <taxon>Bacteria</taxon>
        <taxon>Thermotogati</taxon>
        <taxon>Thermotogota</taxon>
        <taxon>Thermotogae</taxon>
        <taxon>Thermotogales</taxon>
        <taxon>Thermotogaceae</taxon>
        <taxon>Pseudothermotoga</taxon>
    </lineage>
</organism>
<keyword id="KW-0963">Cytoplasm</keyword>
<keyword id="KW-0238">DNA-binding</keyword>
<keyword id="KW-1185">Reference proteome</keyword>
<keyword id="KW-0804">Transcription</keyword>
<keyword id="KW-0805">Transcription regulation</keyword>
<protein>
    <recommendedName>
        <fullName evidence="1">Probable transcriptional regulatory protein Tlet_1011</fullName>
    </recommendedName>
</protein>